<name>FAKD3_HUMAN</name>
<protein>
    <recommendedName>
        <fullName>FAST kinase domain-containing protein 3, mitochondrial</fullName>
    </recommendedName>
</protein>
<comment type="function">
    <text evidence="4 5">Required for normal mitochondrial respiration (PubMed:20869947). Increases steady-state levels and half-lives of a subset of mature mitochondrial mRNAs MT-ND2, MT-ND3, MT-CYTB, MT-CO2, and MT-ATP8/6. Promotes MT-CO1 mRNA translation and increases mitochondrial complex IV assembly and activity (PubMed:27789713).</text>
</comment>
<comment type="interaction">
    <interactant intactId="EBI-10234819">
        <id>Q14CZ7</id>
    </interactant>
    <interactant intactId="EBI-741181">
        <id>Q6RW13</id>
        <label>AGTRAP</label>
    </interactant>
    <organismsDiffer>false</organismsDiffer>
    <experiments>3</experiments>
</comment>
<comment type="interaction">
    <interactant intactId="EBI-10234819">
        <id>Q14CZ7</id>
    </interactant>
    <interactant intactId="EBI-10175124">
        <id>Q8IZU0</id>
        <label>FAM9B</label>
    </interactant>
    <organismsDiffer>false</organismsDiffer>
    <experiments>4</experiments>
</comment>
<comment type="interaction">
    <interactant intactId="EBI-10234819">
        <id>Q14CZ7</id>
    </interactant>
    <interactant intactId="EBI-749530">
        <id>P43365</id>
        <label>MAGEA12</label>
    </interactant>
    <organismsDiffer>false</organismsDiffer>
    <experiments>3</experiments>
</comment>
<comment type="subcellular location">
    <subcellularLocation>
        <location evidence="4 5">Mitochondrion</location>
    </subcellularLocation>
</comment>
<comment type="tissue specificity">
    <text evidence="4">Expression detected in spleen, thymus, testis, ovary, colon, heart, smooth muscle, kidney, brain, lung, liver and white adipose tissue with highest expression in liver and thyroid.</text>
</comment>
<comment type="domain">
    <text evidence="5">RAP domain is required for FASTKD3 function in mRNA stability and translation.</text>
</comment>
<comment type="similarity">
    <text evidence="6">Belongs to the FAST kinase family.</text>
</comment>
<sequence>MALITLRKNLYRLSDFQMHRALAALKNKPLNHVHKVVKERLCPWLCSRQPEPFGVKFHHAHCKKFHSKNGNDLHPLGGPVFSQVSDCDRLEQNVKNEESQMFYRRLSNLTSSEEVLSFISTMETLPDTMAAGALQRICEVEKKDGDQGLPKEILENSIFQALCFQFEKEPSQLSNTSLVTALQALILLHVDPQSSLLLNLVAECQNRLRKGGMEVRNLCILGESLITLHSSGCVTLELIINQLQGEKLETFTPEDIVALYRILQACTEKVDEHQTFLNKINNFSLSIVSNLSPKLISQMLTALVVLDQSQAFPLIIKLGKYVVRHVPHFTNEELRRVLEAFIYFGHHDTFFTKALEHRVAAVCLTLDPEVVCRVMEYCSRELILSKPILNAVAETFVCQTEKFSPRQISALMEPFGKLNYLPPNASALFRKLENVLFTHFNYFPPKSLLKLLHSCSLNECHPVNFLAKIFKPLFLQRLQGKESHLDTLSRAQLTQLFLASVLECPFYKGPKLLPKYQVKSFLTPCCSLETPVDSQLYRYVKIGLTNLLGARLYFAPKVLTPYCYTIDVEIKLDEEGFVLPSTANEDIHKRIALCIDGPKRFCSNSKHLLGKEAIKQRHLQLLGYQVVQIPYHEIGMLKSRRELVEYLQRKLFSQNTVHWLQE</sequence>
<dbReference type="EMBL" id="AC010346">
    <property type="status" value="NOT_ANNOTATED_CDS"/>
    <property type="molecule type" value="Genomic_DNA"/>
</dbReference>
<dbReference type="EMBL" id="BC001295">
    <property type="protein sequence ID" value="AAH01295.2"/>
    <property type="molecule type" value="mRNA"/>
</dbReference>
<dbReference type="EMBL" id="BC113563">
    <property type="protein sequence ID" value="AAI13564.1"/>
    <property type="molecule type" value="mRNA"/>
</dbReference>
<dbReference type="CCDS" id="CCDS3873.1"/>
<dbReference type="RefSeq" id="NP_076996.2">
    <property type="nucleotide sequence ID" value="NM_024091.3"/>
</dbReference>
<dbReference type="RefSeq" id="XP_006714561.1">
    <property type="nucleotide sequence ID" value="XM_006714498.2"/>
</dbReference>
<dbReference type="RefSeq" id="XP_047273655.1">
    <property type="nucleotide sequence ID" value="XM_047417699.1"/>
</dbReference>
<dbReference type="RefSeq" id="XP_054209414.1">
    <property type="nucleotide sequence ID" value="XM_054353439.1"/>
</dbReference>
<dbReference type="SMR" id="Q14CZ7"/>
<dbReference type="BioGRID" id="122523">
    <property type="interactions" value="135"/>
</dbReference>
<dbReference type="FunCoup" id="Q14CZ7">
    <property type="interactions" value="2456"/>
</dbReference>
<dbReference type="IntAct" id="Q14CZ7">
    <property type="interactions" value="94"/>
</dbReference>
<dbReference type="MINT" id="Q14CZ7"/>
<dbReference type="STRING" id="9606.ENSP00000264669"/>
<dbReference type="iPTMnet" id="Q14CZ7"/>
<dbReference type="PhosphoSitePlus" id="Q14CZ7"/>
<dbReference type="SwissPalm" id="Q14CZ7"/>
<dbReference type="BioMuta" id="FASTKD3"/>
<dbReference type="DMDM" id="294862434"/>
<dbReference type="jPOST" id="Q14CZ7"/>
<dbReference type="MassIVE" id="Q14CZ7"/>
<dbReference type="PaxDb" id="9606-ENSP00000264669"/>
<dbReference type="PeptideAtlas" id="Q14CZ7"/>
<dbReference type="ProteomicsDB" id="60338"/>
<dbReference type="Pumba" id="Q14CZ7"/>
<dbReference type="Antibodypedia" id="22426">
    <property type="antibodies" value="183 antibodies from 28 providers"/>
</dbReference>
<dbReference type="DNASU" id="79072"/>
<dbReference type="Ensembl" id="ENST00000264669.10">
    <property type="protein sequence ID" value="ENSP00000264669.5"/>
    <property type="gene ID" value="ENSG00000124279.12"/>
</dbReference>
<dbReference type="GeneID" id="79072"/>
<dbReference type="KEGG" id="hsa:79072"/>
<dbReference type="MANE-Select" id="ENST00000264669.10">
    <property type="protein sequence ID" value="ENSP00000264669.5"/>
    <property type="RefSeq nucleotide sequence ID" value="NM_024091.4"/>
    <property type="RefSeq protein sequence ID" value="NP_076996.2"/>
</dbReference>
<dbReference type="UCSC" id="uc003jeb.4">
    <property type="organism name" value="human"/>
</dbReference>
<dbReference type="AGR" id="HGNC:28758"/>
<dbReference type="CTD" id="79072"/>
<dbReference type="GeneCards" id="FASTKD3"/>
<dbReference type="HGNC" id="HGNC:28758">
    <property type="gene designation" value="FASTKD3"/>
</dbReference>
<dbReference type="HPA" id="ENSG00000124279">
    <property type="expression patterns" value="Low tissue specificity"/>
</dbReference>
<dbReference type="MalaCards" id="FASTKD3"/>
<dbReference type="MIM" id="617530">
    <property type="type" value="gene"/>
</dbReference>
<dbReference type="neXtProt" id="NX_Q14CZ7"/>
<dbReference type="OpenTargets" id="ENSG00000124279"/>
<dbReference type="PharmGKB" id="PA145148868"/>
<dbReference type="VEuPathDB" id="HostDB:ENSG00000124279"/>
<dbReference type="eggNOG" id="ENOG502QW8P">
    <property type="taxonomic scope" value="Eukaryota"/>
</dbReference>
<dbReference type="GeneTree" id="ENSGT01030000234607"/>
<dbReference type="HOGENOM" id="CLU_028858_0_0_1"/>
<dbReference type="InParanoid" id="Q14CZ7"/>
<dbReference type="OMA" id="VQIPYHE"/>
<dbReference type="OrthoDB" id="9985850at2759"/>
<dbReference type="PAN-GO" id="Q14CZ7">
    <property type="GO annotations" value="5 GO annotations based on evolutionary models"/>
</dbReference>
<dbReference type="PhylomeDB" id="Q14CZ7"/>
<dbReference type="TreeFam" id="TF324885"/>
<dbReference type="PathwayCommons" id="Q14CZ7"/>
<dbReference type="SignaLink" id="Q14CZ7"/>
<dbReference type="BioGRID-ORCS" id="79072">
    <property type="hits" value="13 hits in 1157 CRISPR screens"/>
</dbReference>
<dbReference type="GenomeRNAi" id="79072"/>
<dbReference type="Pharos" id="Q14CZ7">
    <property type="development level" value="Tbio"/>
</dbReference>
<dbReference type="PRO" id="PR:Q14CZ7"/>
<dbReference type="Proteomes" id="UP000005640">
    <property type="component" value="Chromosome 5"/>
</dbReference>
<dbReference type="RNAct" id="Q14CZ7">
    <property type="molecule type" value="protein"/>
</dbReference>
<dbReference type="Bgee" id="ENSG00000124279">
    <property type="expression patterns" value="Expressed in oocyte and 198 other cell types or tissues"/>
</dbReference>
<dbReference type="ExpressionAtlas" id="Q14CZ7">
    <property type="expression patterns" value="baseline and differential"/>
</dbReference>
<dbReference type="GO" id="GO:0005759">
    <property type="term" value="C:mitochondrial matrix"/>
    <property type="evidence" value="ECO:0000318"/>
    <property type="project" value="GO_Central"/>
</dbReference>
<dbReference type="GO" id="GO:0005739">
    <property type="term" value="C:mitochondrion"/>
    <property type="evidence" value="ECO:0000314"/>
    <property type="project" value="UniProtKB"/>
</dbReference>
<dbReference type="GO" id="GO:0005654">
    <property type="term" value="C:nucleoplasm"/>
    <property type="evidence" value="ECO:0000314"/>
    <property type="project" value="HPA"/>
</dbReference>
<dbReference type="GO" id="GO:0035770">
    <property type="term" value="C:ribonucleoprotein granule"/>
    <property type="evidence" value="ECO:0000318"/>
    <property type="project" value="GO_Central"/>
</dbReference>
<dbReference type="GO" id="GO:0003723">
    <property type="term" value="F:RNA binding"/>
    <property type="evidence" value="ECO:0007005"/>
    <property type="project" value="UniProtKB"/>
</dbReference>
<dbReference type="GO" id="GO:0033617">
    <property type="term" value="P:mitochondrial cytochrome c oxidase assembly"/>
    <property type="evidence" value="ECO:0000314"/>
    <property type="project" value="UniProtKB"/>
</dbReference>
<dbReference type="GO" id="GO:0000963">
    <property type="term" value="P:mitochondrial RNA processing"/>
    <property type="evidence" value="ECO:0000318"/>
    <property type="project" value="GO_Central"/>
</dbReference>
<dbReference type="GO" id="GO:0070131">
    <property type="term" value="P:positive regulation of mitochondrial translation"/>
    <property type="evidence" value="ECO:0000314"/>
    <property type="project" value="UniProtKB"/>
</dbReference>
<dbReference type="GO" id="GO:0044528">
    <property type="term" value="P:regulation of mitochondrial mRNA stability"/>
    <property type="evidence" value="ECO:0000314"/>
    <property type="project" value="UniProtKB"/>
</dbReference>
<dbReference type="InterPro" id="IPR013579">
    <property type="entry name" value="FAST_2"/>
</dbReference>
<dbReference type="InterPro" id="IPR050870">
    <property type="entry name" value="FAST_kinase"/>
</dbReference>
<dbReference type="InterPro" id="IPR010622">
    <property type="entry name" value="FAST_Leu-rich"/>
</dbReference>
<dbReference type="InterPro" id="IPR013584">
    <property type="entry name" value="RAP"/>
</dbReference>
<dbReference type="PANTHER" id="PTHR21228:SF9">
    <property type="entry name" value="FAST KINASE DOMAIN-CONTAINING PROTEIN 3, MITOCHONDRIAL"/>
    <property type="match status" value="1"/>
</dbReference>
<dbReference type="PANTHER" id="PTHR21228">
    <property type="entry name" value="FAST LEU-RICH DOMAIN-CONTAINING"/>
    <property type="match status" value="1"/>
</dbReference>
<dbReference type="Pfam" id="PF06743">
    <property type="entry name" value="FAST_1"/>
    <property type="match status" value="1"/>
</dbReference>
<dbReference type="Pfam" id="PF08368">
    <property type="entry name" value="FAST_2"/>
    <property type="match status" value="1"/>
</dbReference>
<dbReference type="Pfam" id="PF08373">
    <property type="entry name" value="RAP"/>
    <property type="match status" value="1"/>
</dbReference>
<dbReference type="SMART" id="SM00952">
    <property type="entry name" value="RAP"/>
    <property type="match status" value="1"/>
</dbReference>
<dbReference type="PROSITE" id="PS51286">
    <property type="entry name" value="RAP"/>
    <property type="match status" value="1"/>
</dbReference>
<organism>
    <name type="scientific">Homo sapiens</name>
    <name type="common">Human</name>
    <dbReference type="NCBI Taxonomy" id="9606"/>
    <lineage>
        <taxon>Eukaryota</taxon>
        <taxon>Metazoa</taxon>
        <taxon>Chordata</taxon>
        <taxon>Craniata</taxon>
        <taxon>Vertebrata</taxon>
        <taxon>Euteleostomi</taxon>
        <taxon>Mammalia</taxon>
        <taxon>Eutheria</taxon>
        <taxon>Euarchontoglires</taxon>
        <taxon>Primates</taxon>
        <taxon>Haplorrhini</taxon>
        <taxon>Catarrhini</taxon>
        <taxon>Hominidae</taxon>
        <taxon>Homo</taxon>
    </lineage>
</organism>
<gene>
    <name type="primary">FASTKD3</name>
</gene>
<feature type="transit peptide" description="Mitochondrion" evidence="6">
    <location>
        <begin position="1"/>
        <end status="unknown"/>
    </location>
</feature>
<feature type="chain" id="PRO_0000284715" description="FAST kinase domain-containing protein 3, mitochondrial">
    <location>
        <begin status="unknown"/>
        <end position="662"/>
    </location>
</feature>
<feature type="domain" description="RAP" evidence="1">
    <location>
        <begin position="591"/>
        <end position="649"/>
    </location>
</feature>
<feature type="sequence variant" id="VAR_057769" description="In dbSNP:rs3733782.">
    <original>L</original>
    <variation>F</variation>
    <location>
        <position position="3"/>
    </location>
</feature>
<feature type="sequence variant" id="VAR_036161" description="In a breast cancer sample; somatic mutation." evidence="3">
    <original>L</original>
    <variation>V</variation>
    <location>
        <position position="22"/>
    </location>
</feature>
<feature type="sequence variant" id="VAR_031809" description="In dbSNP:rs2966952." evidence="2">
    <original>K</original>
    <variation>R</variation>
    <location>
        <position position="56"/>
    </location>
</feature>
<feature type="sequence variant" id="VAR_031810" description="In dbSNP:rs16879259.">
    <original>E</original>
    <variation>G</variation>
    <location>
        <position position="459"/>
    </location>
</feature>
<evidence type="ECO:0000255" key="1">
    <source>
        <dbReference type="PROSITE-ProRule" id="PRU00619"/>
    </source>
</evidence>
<evidence type="ECO:0000269" key="2">
    <source>
    </source>
</evidence>
<evidence type="ECO:0000269" key="3">
    <source>
    </source>
</evidence>
<evidence type="ECO:0000269" key="4">
    <source>
    </source>
</evidence>
<evidence type="ECO:0000269" key="5">
    <source>
    </source>
</evidence>
<evidence type="ECO:0000305" key="6"/>
<keyword id="KW-0496">Mitochondrion</keyword>
<keyword id="KW-1267">Proteomics identification</keyword>
<keyword id="KW-1185">Reference proteome</keyword>
<keyword id="KW-0809">Transit peptide</keyword>
<reference key="1">
    <citation type="journal article" date="2004" name="Nature">
        <title>The DNA sequence and comparative analysis of human chromosome 5.</title>
        <authorList>
            <person name="Schmutz J."/>
            <person name="Martin J."/>
            <person name="Terry A."/>
            <person name="Couronne O."/>
            <person name="Grimwood J."/>
            <person name="Lowry S."/>
            <person name="Gordon L.A."/>
            <person name="Scott D."/>
            <person name="Xie G."/>
            <person name="Huang W."/>
            <person name="Hellsten U."/>
            <person name="Tran-Gyamfi M."/>
            <person name="She X."/>
            <person name="Prabhakar S."/>
            <person name="Aerts A."/>
            <person name="Altherr M."/>
            <person name="Bajorek E."/>
            <person name="Black S."/>
            <person name="Branscomb E."/>
            <person name="Caoile C."/>
            <person name="Challacombe J.F."/>
            <person name="Chan Y.M."/>
            <person name="Denys M."/>
            <person name="Detter J.C."/>
            <person name="Escobar J."/>
            <person name="Flowers D."/>
            <person name="Fotopulos D."/>
            <person name="Glavina T."/>
            <person name="Gomez M."/>
            <person name="Gonzales E."/>
            <person name="Goodstein D."/>
            <person name="Grigoriev I."/>
            <person name="Groza M."/>
            <person name="Hammon N."/>
            <person name="Hawkins T."/>
            <person name="Haydu L."/>
            <person name="Israni S."/>
            <person name="Jett J."/>
            <person name="Kadner K."/>
            <person name="Kimball H."/>
            <person name="Kobayashi A."/>
            <person name="Lopez F."/>
            <person name="Lou Y."/>
            <person name="Martinez D."/>
            <person name="Medina C."/>
            <person name="Morgan J."/>
            <person name="Nandkeshwar R."/>
            <person name="Noonan J.P."/>
            <person name="Pitluck S."/>
            <person name="Pollard M."/>
            <person name="Predki P."/>
            <person name="Priest J."/>
            <person name="Ramirez L."/>
            <person name="Retterer J."/>
            <person name="Rodriguez A."/>
            <person name="Rogers S."/>
            <person name="Salamov A."/>
            <person name="Salazar A."/>
            <person name="Thayer N."/>
            <person name="Tice H."/>
            <person name="Tsai M."/>
            <person name="Ustaszewska A."/>
            <person name="Vo N."/>
            <person name="Wheeler J."/>
            <person name="Wu K."/>
            <person name="Yang J."/>
            <person name="Dickson M."/>
            <person name="Cheng J.-F."/>
            <person name="Eichler E.E."/>
            <person name="Olsen A."/>
            <person name="Pennacchio L.A."/>
            <person name="Rokhsar D.S."/>
            <person name="Richardson P."/>
            <person name="Lucas S.M."/>
            <person name="Myers R.M."/>
            <person name="Rubin E.M."/>
        </authorList>
    </citation>
    <scope>NUCLEOTIDE SEQUENCE [LARGE SCALE GENOMIC DNA]</scope>
</reference>
<reference key="2">
    <citation type="journal article" date="2004" name="Genome Res.">
        <title>The status, quality, and expansion of the NIH full-length cDNA project: the Mammalian Gene Collection (MGC).</title>
        <authorList>
            <consortium name="The MGC Project Team"/>
        </authorList>
    </citation>
    <scope>NUCLEOTIDE SEQUENCE [LARGE SCALE MRNA]</scope>
    <scope>VARIANT ARG-56</scope>
    <source>
        <tissue>Brain</tissue>
        <tissue>Placenta</tissue>
    </source>
</reference>
<reference key="3">
    <citation type="journal article" date="2010" name="Biochem. Biophys. Res. Commun.">
        <title>Fast kinase domain-containing protein 3 is a mitochondrial protein essential for cellular respiration.</title>
        <authorList>
            <person name="Simarro M."/>
            <person name="Gimenez-Cassina A."/>
            <person name="Kedersha N."/>
            <person name="Lazaro J.B."/>
            <person name="Adelmant G.O."/>
            <person name="Marto J.A."/>
            <person name="Rhee K."/>
            <person name="Tisdale S."/>
            <person name="Danial N."/>
            <person name="Benarafa C."/>
            <person name="Orduna A."/>
            <person name="Anderson P."/>
        </authorList>
    </citation>
    <scope>FUNCTION</scope>
    <scope>IDENTIFICATION BY MASS SPECTROMETRY</scope>
    <scope>SUBCELLULAR LOCATION</scope>
    <scope>TISSUE SPECIFICITY</scope>
</reference>
<reference key="4">
    <citation type="journal article" date="2006" name="Science">
        <title>The consensus coding sequences of human breast and colorectal cancers.</title>
        <authorList>
            <person name="Sjoeblom T."/>
            <person name="Jones S."/>
            <person name="Wood L.D."/>
            <person name="Parsons D.W."/>
            <person name="Lin J."/>
            <person name="Barber T.D."/>
            <person name="Mandelker D."/>
            <person name="Leary R.J."/>
            <person name="Ptak J."/>
            <person name="Silliman N."/>
            <person name="Szabo S."/>
            <person name="Buckhaults P."/>
            <person name="Farrell C."/>
            <person name="Meeh P."/>
            <person name="Markowitz S.D."/>
            <person name="Willis J."/>
            <person name="Dawson D."/>
            <person name="Willson J.K.V."/>
            <person name="Gazdar A.F."/>
            <person name="Hartigan J."/>
            <person name="Wu L."/>
            <person name="Liu C."/>
            <person name="Parmigiani G."/>
            <person name="Park B.H."/>
            <person name="Bachman K.E."/>
            <person name="Papadopoulos N."/>
            <person name="Vogelstein B."/>
            <person name="Kinzler K.W."/>
            <person name="Velculescu V.E."/>
        </authorList>
    </citation>
    <scope>VARIANT [LARGE SCALE ANALYSIS] VAL-22</scope>
</reference>
<reference key="5">
    <citation type="journal article" date="2016" name="J. Biol. Chem.">
        <title>Role of FAST kinase domains 3 (FASTKD3) in post-transcriptional regulation of mitochondrial gene expression.</title>
        <authorList>
            <person name="Boehm E."/>
            <person name="Zornoza M."/>
            <person name="Jourdain A.A."/>
            <person name="Delmiro Magdalena A."/>
            <person name="Garcia-Consuegra I."/>
            <person name="Torres Merino R."/>
            <person name="Orduna A."/>
            <person name="Martin M.A."/>
            <person name="Martinou J.C."/>
            <person name="De la Fuente M.A."/>
            <person name="Simarro M."/>
        </authorList>
    </citation>
    <scope>SUBCELLULAR LOCATION</scope>
    <scope>FUNCTION</scope>
    <scope>DOMAIN</scope>
</reference>
<accession>Q14CZ7</accession>
<accession>Q9BVD3</accession>
<proteinExistence type="evidence at protein level"/>